<accession>P31547</accession>
<gene>
    <name type="primary">metI</name>
    <name type="synonym">yaeE</name>
    <name type="ordered locus">b0198</name>
    <name type="ordered locus">JW0194</name>
</gene>
<feature type="chain" id="PRO_0000060098" description="D-methionine transport system permease protein MetI">
    <location>
        <begin position="1"/>
        <end position="217"/>
    </location>
</feature>
<feature type="topological domain" description="Periplasmic" evidence="1">
    <location>
        <begin position="1"/>
        <end position="19"/>
    </location>
</feature>
<feature type="transmembrane region" description="Helical" evidence="2">
    <location>
        <begin position="20"/>
        <end position="40"/>
    </location>
</feature>
<feature type="topological domain" description="Cytoplasmic" evidence="1">
    <location>
        <begin position="41"/>
        <end position="57"/>
    </location>
</feature>
<feature type="transmembrane region" description="Helical" evidence="2">
    <location>
        <begin position="58"/>
        <end position="78"/>
    </location>
</feature>
<feature type="topological domain" description="Periplasmic" evidence="1">
    <location>
        <begin position="79"/>
        <end position="80"/>
    </location>
</feature>
<feature type="transmembrane region" description="Helical" evidence="2">
    <location>
        <begin position="81"/>
        <end position="101"/>
    </location>
</feature>
<feature type="topological domain" description="Cytoplasmic" evidence="1">
    <location>
        <begin position="102"/>
        <end position="151"/>
    </location>
</feature>
<feature type="transmembrane region" description="Helical" evidence="2">
    <location>
        <begin position="152"/>
        <end position="172"/>
    </location>
</feature>
<feature type="topological domain" description="Periplasmic" evidence="1">
    <location>
        <begin position="173"/>
        <end position="185"/>
    </location>
</feature>
<feature type="transmembrane region" description="Helical" evidence="2">
    <location>
        <begin position="186"/>
        <end position="206"/>
    </location>
</feature>
<feature type="topological domain" description="Cytoplasmic" evidence="4">
    <location>
        <begin position="207"/>
        <end position="217"/>
    </location>
</feature>
<feature type="domain" description="ABC transmembrane type-1" evidence="2">
    <location>
        <begin position="13"/>
        <end position="204"/>
    </location>
</feature>
<feature type="helix" evidence="8">
    <location>
        <begin position="3"/>
        <end position="40"/>
    </location>
</feature>
<feature type="strand" evidence="8">
    <location>
        <begin position="45"/>
        <end position="47"/>
    </location>
</feature>
<feature type="helix" evidence="8">
    <location>
        <begin position="50"/>
        <end position="64"/>
    </location>
</feature>
<feature type="helix" evidence="8">
    <location>
        <begin position="68"/>
        <end position="74"/>
    </location>
</feature>
<feature type="helix" evidence="8">
    <location>
        <begin position="76"/>
        <end position="83"/>
    </location>
</feature>
<feature type="strand" evidence="8">
    <location>
        <begin position="86"/>
        <end position="88"/>
    </location>
</feature>
<feature type="helix" evidence="8">
    <location>
        <begin position="89"/>
        <end position="112"/>
    </location>
</feature>
<feature type="helix" evidence="8">
    <location>
        <begin position="118"/>
        <end position="125"/>
    </location>
</feature>
<feature type="helix" evidence="8">
    <location>
        <begin position="130"/>
        <end position="136"/>
    </location>
</feature>
<feature type="helix" evidence="8">
    <location>
        <begin position="138"/>
        <end position="163"/>
    </location>
</feature>
<feature type="turn" evidence="8">
    <location>
        <begin position="164"/>
        <end position="168"/>
    </location>
</feature>
<feature type="helix" evidence="8">
    <location>
        <begin position="171"/>
        <end position="180"/>
    </location>
</feature>
<feature type="helix" evidence="8">
    <location>
        <begin position="186"/>
        <end position="211"/>
    </location>
</feature>
<name>METI_ECOLI</name>
<sequence>MSEPMMWLLVRGVWETLAMTFVSGFFGFVIGLPVGVLLYVTRPGQIIANAKLYRTVSAIVNIFRSIPFIILLVWMIPFTRVIVGTSIGLQAAIVPLTVGAAPFIARMVENALLEIPTGLIEASRAMGATPMQIVRKVLLPEALPGLVNAATITLITLVGYSAMGGAVGAGGLGQIGYQYGYIGYNATVMNTVLVLLVILVYLIQFAGDRIVRAVTRK</sequence>
<organism>
    <name type="scientific">Escherichia coli (strain K12)</name>
    <dbReference type="NCBI Taxonomy" id="83333"/>
    <lineage>
        <taxon>Bacteria</taxon>
        <taxon>Pseudomonadati</taxon>
        <taxon>Pseudomonadota</taxon>
        <taxon>Gammaproteobacteria</taxon>
        <taxon>Enterobacterales</taxon>
        <taxon>Enterobacteriaceae</taxon>
        <taxon>Escherichia</taxon>
    </lineage>
</organism>
<evidence type="ECO:0000255" key="1"/>
<evidence type="ECO:0000255" key="2">
    <source>
        <dbReference type="PROSITE-ProRule" id="PRU00441"/>
    </source>
</evidence>
<evidence type="ECO:0000269" key="3">
    <source>
    </source>
</evidence>
<evidence type="ECO:0000269" key="4">
    <source>
    </source>
</evidence>
<evidence type="ECO:0000269" key="5">
    <source>
    </source>
</evidence>
<evidence type="ECO:0000305" key="6"/>
<evidence type="ECO:0000305" key="7">
    <source>
    </source>
</evidence>
<evidence type="ECO:0007829" key="8">
    <source>
        <dbReference type="PDB" id="3TUI"/>
    </source>
</evidence>
<reference key="1">
    <citation type="submission" date="1993-04" db="EMBL/GenBank/DDBJ databases">
        <authorList>
            <person name="Miyamoto K."/>
        </authorList>
    </citation>
    <scope>NUCLEOTIDE SEQUENCE [GENOMIC DNA]</scope>
    <source>
        <strain>K12</strain>
    </source>
</reference>
<reference key="2">
    <citation type="submission" date="1996-02" db="EMBL/GenBank/DDBJ databases">
        <title>Systematic sequencing of the Escherichia coli genome: analysis of the 4.0 - 6.0 min (189,987 - 281,416bp) region.</title>
        <authorList>
            <person name="Takemoto K."/>
            <person name="Mori H."/>
            <person name="Murayama N."/>
            <person name="Kataoka K."/>
            <person name="Yano M."/>
            <person name="Itoh T."/>
            <person name="Yamamoto Y."/>
            <person name="Inokuchi H."/>
            <person name="Miki T."/>
            <person name="Hatada E."/>
            <person name="Fukuda R."/>
            <person name="Ichihara S."/>
            <person name="Mizuno T."/>
            <person name="Makino K."/>
            <person name="Nakata A."/>
            <person name="Yura T."/>
            <person name="Sampei G."/>
            <person name="Mizobuchi K."/>
        </authorList>
    </citation>
    <scope>NUCLEOTIDE SEQUENCE [LARGE SCALE GENOMIC DNA]</scope>
    <source>
        <strain>K12 / W3110 / ATCC 27325 / DSM 5911</strain>
    </source>
</reference>
<reference key="3">
    <citation type="submission" date="1997-01" db="EMBL/GenBank/DDBJ databases">
        <title>Sequence of minutes 4-25 of Escherichia coli.</title>
        <authorList>
            <person name="Chung E."/>
            <person name="Allen E."/>
            <person name="Araujo R."/>
            <person name="Aparicio A.M."/>
            <person name="Davis K."/>
            <person name="Duncan M."/>
            <person name="Federspiel N."/>
            <person name="Hyman R."/>
            <person name="Kalman S."/>
            <person name="Komp C."/>
            <person name="Kurdi O."/>
            <person name="Lew H."/>
            <person name="Lin D."/>
            <person name="Namath A."/>
            <person name="Oefner P."/>
            <person name="Roberts D."/>
            <person name="Schramm S."/>
            <person name="Davis R.W."/>
        </authorList>
    </citation>
    <scope>NUCLEOTIDE SEQUENCE [LARGE SCALE GENOMIC DNA]</scope>
    <source>
        <strain>K12 / MG1655 / ATCC 47076</strain>
    </source>
</reference>
<reference key="4">
    <citation type="journal article" date="1997" name="Science">
        <title>The complete genome sequence of Escherichia coli K-12.</title>
        <authorList>
            <person name="Blattner F.R."/>
            <person name="Plunkett G. III"/>
            <person name="Bloch C.A."/>
            <person name="Perna N.T."/>
            <person name="Burland V."/>
            <person name="Riley M."/>
            <person name="Collado-Vides J."/>
            <person name="Glasner J.D."/>
            <person name="Rode C.K."/>
            <person name="Mayhew G.F."/>
            <person name="Gregor J."/>
            <person name="Davis N.W."/>
            <person name="Kirkpatrick H.A."/>
            <person name="Goeden M.A."/>
            <person name="Rose D.J."/>
            <person name="Mau B."/>
            <person name="Shao Y."/>
        </authorList>
    </citation>
    <scope>NUCLEOTIDE SEQUENCE [LARGE SCALE GENOMIC DNA]</scope>
    <source>
        <strain>K12 / MG1655 / ATCC 47076</strain>
    </source>
</reference>
<reference key="5">
    <citation type="journal article" date="2006" name="Mol. Syst. Biol.">
        <title>Highly accurate genome sequences of Escherichia coli K-12 strains MG1655 and W3110.</title>
        <authorList>
            <person name="Hayashi K."/>
            <person name="Morooka N."/>
            <person name="Yamamoto Y."/>
            <person name="Fujita K."/>
            <person name="Isono K."/>
            <person name="Choi S."/>
            <person name="Ohtsubo E."/>
            <person name="Baba T."/>
            <person name="Wanner B.L."/>
            <person name="Mori H."/>
            <person name="Horiuchi T."/>
        </authorList>
    </citation>
    <scope>NUCLEOTIDE SEQUENCE [LARGE SCALE GENOMIC DNA]</scope>
    <source>
        <strain>K12 / W3110 / ATCC 27325 / DSM 5911</strain>
    </source>
</reference>
<reference key="6">
    <citation type="journal article" date="2002" name="J. Bacteriol.">
        <title>The metD D-methionine transporter locus of Escherichia coli is an ABC transporter gene cluster.</title>
        <authorList>
            <person name="Gal J."/>
            <person name="Szvetnik A."/>
            <person name="Schnell R."/>
            <person name="Kalman M."/>
        </authorList>
    </citation>
    <scope>FUNCTION</scope>
    <source>
        <strain>K12 / MG1655 / ATCC 47076</strain>
    </source>
</reference>
<reference key="7">
    <citation type="journal article" date="2005" name="Science">
        <title>Global topology analysis of the Escherichia coli inner membrane proteome.</title>
        <authorList>
            <person name="Daley D.O."/>
            <person name="Rapp M."/>
            <person name="Granseth E."/>
            <person name="Melen K."/>
            <person name="Drew D."/>
            <person name="von Heijne G."/>
        </authorList>
    </citation>
    <scope>TOPOLOGY [LARGE SCALE ANALYSIS]</scope>
    <scope>SUBCELLULAR LOCATION</scope>
    <source>
        <strain>K12 / MG1655 / ATCC 47076</strain>
    </source>
</reference>
<reference key="8">
    <citation type="journal article" date="2015" name="Proc. Natl. Acad. Sci. U.S.A.">
        <title>Contact-dependent growth inhibition toxins exploit multiple independent cell-entry pathways.</title>
        <authorList>
            <person name="Willett J.L."/>
            <person name="Gucinski G.C."/>
            <person name="Fatherree J.P."/>
            <person name="Low D.A."/>
            <person name="Hayes C.S."/>
        </authorList>
    </citation>
    <scope>RECEPTOR FOR CDI TOXIN ENTRY INTO TARGET CELL CYTOPLASM (MICROBIAL INFECTION)</scope>
    <scope>DISRUPTION PHENOTYPE</scope>
    <source>
        <strain>K12 / MC4100 / ATCC 35695 / DSM 6574</strain>
    </source>
</reference>
<keyword id="KW-0002">3D-structure</keyword>
<keyword id="KW-0029">Amino-acid transport</keyword>
<keyword id="KW-0997">Cell inner membrane</keyword>
<keyword id="KW-1003">Cell membrane</keyword>
<keyword id="KW-0472">Membrane</keyword>
<keyword id="KW-1185">Reference proteome</keyword>
<keyword id="KW-0812">Transmembrane</keyword>
<keyword id="KW-1133">Transmembrane helix</keyword>
<keyword id="KW-0813">Transport</keyword>
<dbReference type="EMBL" id="D15061">
    <property type="protein sequence ID" value="BAA03658.1"/>
    <property type="status" value="ALT_INIT"/>
    <property type="molecule type" value="Genomic_DNA"/>
</dbReference>
<dbReference type="EMBL" id="U70214">
    <property type="protein sequence ID" value="AAB08626.1"/>
    <property type="molecule type" value="Genomic_DNA"/>
</dbReference>
<dbReference type="EMBL" id="U00096">
    <property type="protein sequence ID" value="AAC73309.1"/>
    <property type="molecule type" value="Genomic_DNA"/>
</dbReference>
<dbReference type="EMBL" id="AP009048">
    <property type="protein sequence ID" value="BAA77875.1"/>
    <property type="molecule type" value="Genomic_DNA"/>
</dbReference>
<dbReference type="PIR" id="F64744">
    <property type="entry name" value="F64744"/>
</dbReference>
<dbReference type="RefSeq" id="NP_414740.1">
    <property type="nucleotide sequence ID" value="NC_000913.3"/>
</dbReference>
<dbReference type="RefSeq" id="WP_001294600.1">
    <property type="nucleotide sequence ID" value="NZ_STEB01000032.1"/>
</dbReference>
<dbReference type="PDB" id="3DHW">
    <property type="method" value="X-ray"/>
    <property type="resolution" value="3.70 A"/>
    <property type="chains" value="A/B/E/F=1-217"/>
</dbReference>
<dbReference type="PDB" id="3TUI">
    <property type="method" value="X-ray"/>
    <property type="resolution" value="2.90 A"/>
    <property type="chains" value="A/B/E/F=1-217"/>
</dbReference>
<dbReference type="PDB" id="3TUJ">
    <property type="method" value="X-ray"/>
    <property type="resolution" value="4.00 A"/>
    <property type="chains" value="A/B=1-217"/>
</dbReference>
<dbReference type="PDB" id="3TUZ">
    <property type="method" value="X-ray"/>
    <property type="resolution" value="3.40 A"/>
    <property type="chains" value="A/B/E/F=1-217"/>
</dbReference>
<dbReference type="PDB" id="6CVL">
    <property type="method" value="X-ray"/>
    <property type="resolution" value="2.95 A"/>
    <property type="chains" value="A/B=1-215"/>
</dbReference>
<dbReference type="PDBsum" id="3DHW"/>
<dbReference type="PDBsum" id="3TUI"/>
<dbReference type="PDBsum" id="3TUJ"/>
<dbReference type="PDBsum" id="3TUZ"/>
<dbReference type="PDBsum" id="6CVL"/>
<dbReference type="SMR" id="P31547"/>
<dbReference type="BioGRID" id="4259754">
    <property type="interactions" value="9"/>
</dbReference>
<dbReference type="ComplexPortal" id="CPX-2114">
    <property type="entry name" value="Methionine ABC transporter complex"/>
</dbReference>
<dbReference type="DIP" id="DIP-11198N"/>
<dbReference type="FunCoup" id="P31547">
    <property type="interactions" value="257"/>
</dbReference>
<dbReference type="IntAct" id="P31547">
    <property type="interactions" value="2"/>
</dbReference>
<dbReference type="STRING" id="511145.b0198"/>
<dbReference type="TCDB" id="3.A.1.24.1">
    <property type="family name" value="the atp-binding cassette (abc) superfamily"/>
</dbReference>
<dbReference type="jPOST" id="P31547"/>
<dbReference type="PaxDb" id="511145-b0198"/>
<dbReference type="EnsemblBacteria" id="AAC73309">
    <property type="protein sequence ID" value="AAC73309"/>
    <property type="gene ID" value="b0198"/>
</dbReference>
<dbReference type="GeneID" id="944894"/>
<dbReference type="KEGG" id="ecj:JW0194"/>
<dbReference type="KEGG" id="eco:b0198"/>
<dbReference type="KEGG" id="ecoc:C3026_00920"/>
<dbReference type="PATRIC" id="fig|1411691.4.peg.2080"/>
<dbReference type="EchoBASE" id="EB1688"/>
<dbReference type="eggNOG" id="COG2011">
    <property type="taxonomic scope" value="Bacteria"/>
</dbReference>
<dbReference type="HOGENOM" id="CLU_077375_0_1_6"/>
<dbReference type="InParanoid" id="P31547"/>
<dbReference type="OMA" id="TFWSAIF"/>
<dbReference type="OrthoDB" id="9793490at2"/>
<dbReference type="PhylomeDB" id="P31547"/>
<dbReference type="BioCyc" id="EcoCyc:METI-MONOMER"/>
<dbReference type="BioCyc" id="MetaCyc:METI-MONOMER"/>
<dbReference type="BRENDA" id="7.4.2.11">
    <property type="organism ID" value="2026"/>
</dbReference>
<dbReference type="EvolutionaryTrace" id="P31547"/>
<dbReference type="PRO" id="PR:P31547"/>
<dbReference type="Proteomes" id="UP000000625">
    <property type="component" value="Chromosome"/>
</dbReference>
<dbReference type="GO" id="GO:0055052">
    <property type="term" value="C:ATP-binding cassette (ABC) transporter complex, substrate-binding subunit-containing"/>
    <property type="evidence" value="ECO:0000314"/>
    <property type="project" value="EcoCyc"/>
</dbReference>
<dbReference type="GO" id="GO:0016020">
    <property type="term" value="C:membrane"/>
    <property type="evidence" value="ECO:0000314"/>
    <property type="project" value="ComplexPortal"/>
</dbReference>
<dbReference type="GO" id="GO:1990197">
    <property type="term" value="C:methionine-importing ABC transporter complex"/>
    <property type="evidence" value="ECO:0000353"/>
    <property type="project" value="ComplexPortal"/>
</dbReference>
<dbReference type="GO" id="GO:0005886">
    <property type="term" value="C:plasma membrane"/>
    <property type="evidence" value="ECO:0000314"/>
    <property type="project" value="EcoCyc"/>
</dbReference>
<dbReference type="GO" id="GO:0033232">
    <property type="term" value="F:ABC-type D-methionine transporter activity"/>
    <property type="evidence" value="ECO:0000269"/>
    <property type="project" value="EcoCyc"/>
</dbReference>
<dbReference type="GO" id="GO:0015191">
    <property type="term" value="F:L-methionine transmembrane transporter activity"/>
    <property type="evidence" value="ECO:0000314"/>
    <property type="project" value="EcoCyc"/>
</dbReference>
<dbReference type="GO" id="GO:0048473">
    <property type="term" value="P:D-methionine transmembrane transport"/>
    <property type="evidence" value="ECO:0000315"/>
    <property type="project" value="CACAO"/>
</dbReference>
<dbReference type="GO" id="GO:1903692">
    <property type="term" value="P:methionine import across plasma membrane"/>
    <property type="evidence" value="ECO:0000314"/>
    <property type="project" value="ComplexPortal"/>
</dbReference>
<dbReference type="GO" id="GO:0015821">
    <property type="term" value="P:methionine transport"/>
    <property type="evidence" value="ECO:0000269"/>
    <property type="project" value="EcoCyc"/>
</dbReference>
<dbReference type="CDD" id="cd06261">
    <property type="entry name" value="TM_PBP2"/>
    <property type="match status" value="1"/>
</dbReference>
<dbReference type="FunFam" id="1.10.3720.10:FF:000002">
    <property type="entry name" value="D-methionine ABC transporter permease MetI"/>
    <property type="match status" value="1"/>
</dbReference>
<dbReference type="Gene3D" id="1.10.3720.10">
    <property type="entry name" value="MetI-like"/>
    <property type="match status" value="1"/>
</dbReference>
<dbReference type="InterPro" id="IPR051322">
    <property type="entry name" value="AA_ABC_Transporter_Permease"/>
</dbReference>
<dbReference type="InterPro" id="IPR000515">
    <property type="entry name" value="MetI-like"/>
</dbReference>
<dbReference type="InterPro" id="IPR035906">
    <property type="entry name" value="MetI-like_sf"/>
</dbReference>
<dbReference type="NCBIfam" id="NF008049">
    <property type="entry name" value="PRK10782.1"/>
    <property type="match status" value="1"/>
</dbReference>
<dbReference type="PANTHER" id="PTHR30450">
    <property type="entry name" value="ABC TRANSPORTER PERMEASE"/>
    <property type="match status" value="1"/>
</dbReference>
<dbReference type="PANTHER" id="PTHR30450:SF8">
    <property type="entry name" value="D-METHIONINE TRANSPORT SYSTEM PERMEASE PROTEIN METI"/>
    <property type="match status" value="1"/>
</dbReference>
<dbReference type="Pfam" id="PF00528">
    <property type="entry name" value="BPD_transp_1"/>
    <property type="match status" value="1"/>
</dbReference>
<dbReference type="SUPFAM" id="SSF161098">
    <property type="entry name" value="MetI-like"/>
    <property type="match status" value="1"/>
</dbReference>
<dbReference type="PROSITE" id="PS50928">
    <property type="entry name" value="ABC_TM1"/>
    <property type="match status" value="1"/>
</dbReference>
<comment type="function">
    <text evidence="3">Part of the binding-protein-dependent transport system for D-methionine and the toxic methionine analog alpha-methyl-methionine. Probably responsible for the translocation of the substrate across the membrane.</text>
</comment>
<comment type="function">
    <text evidence="5">(Microbial infection) Probably transports the toxic C-terminal region of CdiA from E.coli strain MHI813 across the inner membrane to the cytoplasm, where CdiA has a toxic effect. Toxin transport is strain-specific, mutations in this gene do not confer resistance to several other tested CdiA toxins.</text>
</comment>
<comment type="interaction">
    <interactant intactId="EBI-8769561">
        <id>P31547</id>
    </interactant>
    <interactant intactId="EBI-541886">
        <id>P30750</id>
        <label>metN</label>
    </interactant>
    <organismsDiffer>false</organismsDiffer>
    <experiments>5</experiments>
</comment>
<comment type="subcellular location">
    <subcellularLocation>
        <location evidence="4">Cell inner membrane</location>
        <topology evidence="7">Multi-pass membrane protein</topology>
    </subcellularLocation>
</comment>
<comment type="disruption phenotype">
    <text evidence="5">Disruption confers resistance to cellular contact-dependent growth inhibition (CDI) CdiA of E.coli strain MHI813, but not to several other tested CdiA toxins.</text>
</comment>
<comment type="similarity">
    <text evidence="6">Belongs to the binding-protein-dependent transport system permease family. CysTW subfamily.</text>
</comment>
<comment type="sequence caution" evidence="6">
    <conflict type="erroneous initiation">
        <sequence resource="EMBL-CDS" id="BAA03658"/>
    </conflict>
    <text>Truncated N-terminus.</text>
</comment>
<protein>
    <recommendedName>
        <fullName>D-methionine transport system permease protein MetI</fullName>
    </recommendedName>
</protein>
<proteinExistence type="evidence at protein level"/>